<reference key="1">
    <citation type="journal article" date="1987" name="J. Bacteriol.">
        <title>Replication properties of pIM13, a naturally occurring plasmid found in Bacillus subtilis, and of its close relative pE5, a plasmid native to Staphylococcus aureus.</title>
        <authorList>
            <person name="Projan S.J."/>
            <person name="Monod M."/>
            <person name="Narayanan C.S."/>
            <person name="Dubnau D."/>
        </authorList>
    </citation>
    <scope>NUCLEOTIDE SEQUENCE [GENOMIC DNA]</scope>
</reference>
<geneLocation type="plasmid">
    <name>pE5</name>
</geneLocation>
<keyword id="KW-0046">Antibiotic resistance</keyword>
<keyword id="KW-0489">Methyltransferase</keyword>
<keyword id="KW-0614">Plasmid</keyword>
<keyword id="KW-0694">RNA-binding</keyword>
<keyword id="KW-0949">S-adenosyl-L-methionine</keyword>
<keyword id="KW-0808">Transferase</keyword>
<accession>P13957</accession>
<dbReference type="EC" id="2.1.1.184"/>
<dbReference type="EMBL" id="M17990">
    <property type="protein sequence ID" value="AAA98228.1"/>
    <property type="molecule type" value="Genomic_DNA"/>
</dbReference>
<dbReference type="PIR" id="B29827">
    <property type="entry name" value="B29827"/>
</dbReference>
<dbReference type="SMR" id="P13957"/>
<dbReference type="GO" id="GO:0005829">
    <property type="term" value="C:cytosol"/>
    <property type="evidence" value="ECO:0007669"/>
    <property type="project" value="TreeGrafter"/>
</dbReference>
<dbReference type="GO" id="GO:0052910">
    <property type="term" value="F:23S rRNA (adenine(2085)-N(6))-dimethyltransferase activity"/>
    <property type="evidence" value="ECO:0007669"/>
    <property type="project" value="UniProtKB-EC"/>
</dbReference>
<dbReference type="GO" id="GO:0003723">
    <property type="term" value="F:RNA binding"/>
    <property type="evidence" value="ECO:0007669"/>
    <property type="project" value="UniProtKB-KW"/>
</dbReference>
<dbReference type="GO" id="GO:0000179">
    <property type="term" value="F:rRNA (adenine-N6,N6-)-dimethyltransferase activity"/>
    <property type="evidence" value="ECO:0007669"/>
    <property type="project" value="InterPro"/>
</dbReference>
<dbReference type="GO" id="GO:0046677">
    <property type="term" value="P:response to antibiotic"/>
    <property type="evidence" value="ECO:0007669"/>
    <property type="project" value="UniProtKB-KW"/>
</dbReference>
<dbReference type="CDD" id="cd02440">
    <property type="entry name" value="AdoMet_MTases"/>
    <property type="match status" value="1"/>
</dbReference>
<dbReference type="Gene3D" id="1.10.8.100">
    <property type="entry name" value="Ribosomal RNA adenine dimethylase-like, domain 2"/>
    <property type="match status" value="1"/>
</dbReference>
<dbReference type="Gene3D" id="3.40.50.150">
    <property type="entry name" value="Vaccinia Virus protein VP39"/>
    <property type="match status" value="1"/>
</dbReference>
<dbReference type="InterPro" id="IPR001737">
    <property type="entry name" value="KsgA/Erm"/>
</dbReference>
<dbReference type="InterPro" id="IPR023165">
    <property type="entry name" value="rRNA_Ade_diMease-like_C"/>
</dbReference>
<dbReference type="InterPro" id="IPR020596">
    <property type="entry name" value="rRNA_Ade_Mease_Trfase_CS"/>
</dbReference>
<dbReference type="InterPro" id="IPR020598">
    <property type="entry name" value="rRNA_Ade_methylase_Trfase_N"/>
</dbReference>
<dbReference type="InterPro" id="IPR029063">
    <property type="entry name" value="SAM-dependent_MTases_sf"/>
</dbReference>
<dbReference type="NCBIfam" id="NF000499">
    <property type="entry name" value="Erm23S_rRNA_broad"/>
    <property type="match status" value="1"/>
</dbReference>
<dbReference type="NCBIfam" id="NF012219">
    <property type="entry name" value="erm_C_23S_MT"/>
    <property type="match status" value="1"/>
</dbReference>
<dbReference type="PANTHER" id="PTHR11727">
    <property type="entry name" value="DIMETHYLADENOSINE TRANSFERASE"/>
    <property type="match status" value="1"/>
</dbReference>
<dbReference type="PANTHER" id="PTHR11727:SF7">
    <property type="entry name" value="DIMETHYLADENOSINE TRANSFERASE-RELATED"/>
    <property type="match status" value="1"/>
</dbReference>
<dbReference type="Pfam" id="PF00398">
    <property type="entry name" value="RrnaAD"/>
    <property type="match status" value="1"/>
</dbReference>
<dbReference type="SMART" id="SM00650">
    <property type="entry name" value="rADc"/>
    <property type="match status" value="1"/>
</dbReference>
<dbReference type="SUPFAM" id="SSF53335">
    <property type="entry name" value="S-adenosyl-L-methionine-dependent methyltransferases"/>
    <property type="match status" value="1"/>
</dbReference>
<dbReference type="PROSITE" id="PS01131">
    <property type="entry name" value="RRNA_A_DIMETH"/>
    <property type="match status" value="1"/>
</dbReference>
<dbReference type="PROSITE" id="PS51689">
    <property type="entry name" value="SAM_RNA_A_N6_MT"/>
    <property type="match status" value="1"/>
</dbReference>
<proteinExistence type="inferred from homology"/>
<organism>
    <name type="scientific">Staphylococcus aureus</name>
    <dbReference type="NCBI Taxonomy" id="1280"/>
    <lineage>
        <taxon>Bacteria</taxon>
        <taxon>Bacillati</taxon>
        <taxon>Bacillota</taxon>
        <taxon>Bacilli</taxon>
        <taxon>Bacillales</taxon>
        <taxon>Staphylococcaceae</taxon>
        <taxon>Staphylococcus</taxon>
    </lineage>
</organism>
<evidence type="ECO:0000255" key="1">
    <source>
        <dbReference type="PROSITE-ProRule" id="PRU01026"/>
    </source>
</evidence>
<name>ERMC2_STAAU</name>
<protein>
    <recommendedName>
        <fullName>rRNA adenine N-6-methyltransferase</fullName>
        <ecNumber>2.1.1.184</ecNumber>
    </recommendedName>
    <alternativeName>
        <fullName>Erythromycin resistance protein</fullName>
    </alternativeName>
    <alternativeName>
        <fullName>Macrolide-lincosamide-streptogramin B resistance protein</fullName>
    </alternativeName>
</protein>
<comment type="function">
    <text>This protein produces a dimethylation of the adenine residue at position 2085 in 23S rRNA, resulting in reduced affinity between ribosomes and macrolide-lincosamide-streptogramin B antibiotics.</text>
</comment>
<comment type="catalytic activity">
    <reaction>
        <text>adenosine(2085) in 23S rRNA + 2 S-adenosyl-L-methionine = N(6)-dimethyladenosine(2085) in 23S rRNA + 2 S-adenosyl-L-homocysteine + 2 H(+)</text>
        <dbReference type="Rhea" id="RHEA:42784"/>
        <dbReference type="Rhea" id="RHEA-COMP:10237"/>
        <dbReference type="Rhea" id="RHEA-COMP:10238"/>
        <dbReference type="ChEBI" id="CHEBI:15378"/>
        <dbReference type="ChEBI" id="CHEBI:57856"/>
        <dbReference type="ChEBI" id="CHEBI:59789"/>
        <dbReference type="ChEBI" id="CHEBI:74411"/>
        <dbReference type="ChEBI" id="CHEBI:74493"/>
        <dbReference type="EC" id="2.1.1.184"/>
    </reaction>
</comment>
<comment type="similarity">
    <text evidence="1">Belongs to the class I-like SAM-binding methyltransferase superfamily. rRNA adenine N(6)-methyltransferase family.</text>
</comment>
<gene>
    <name type="primary">ermC</name>
</gene>
<sequence length="244" mass="28935">MNEKNIKHSQNFITSKHNIDKIMTNIRLNEHDNIFEIGSGKGHFTLELVQRCNFVTAIEIDHKLCKTTENKLVDHDNFQVLNKDILQFKFPKNQSYKIFGNIPYNISTDIIRKIVFDSIADEIYLIVEYGFAKRLLNTKRSLALFLMAEVDISILSMVPREYFHPKPRVNSSLIRLNRKKSRISHKDKQKYNYFVMKWVNKEYKKIFTKNQFNNSLKHAGIDDLNNISFEQFLSLFNSYKLFNK</sequence>
<feature type="chain" id="PRO_0000101683" description="rRNA adenine N-6-methyltransferase">
    <location>
        <begin position="1"/>
        <end position="244"/>
    </location>
</feature>
<feature type="binding site" evidence="1">
    <location>
        <position position="11"/>
    </location>
    <ligand>
        <name>S-adenosyl-L-methionine</name>
        <dbReference type="ChEBI" id="CHEBI:59789"/>
    </ligand>
</feature>
<feature type="binding site" evidence="1">
    <location>
        <position position="13"/>
    </location>
    <ligand>
        <name>S-adenosyl-L-methionine</name>
        <dbReference type="ChEBI" id="CHEBI:59789"/>
    </ligand>
</feature>
<feature type="binding site" evidence="1">
    <location>
        <position position="38"/>
    </location>
    <ligand>
        <name>S-adenosyl-L-methionine</name>
        <dbReference type="ChEBI" id="CHEBI:59789"/>
    </ligand>
</feature>
<feature type="binding site" evidence="1">
    <location>
        <position position="59"/>
    </location>
    <ligand>
        <name>S-adenosyl-L-methionine</name>
        <dbReference type="ChEBI" id="CHEBI:59789"/>
    </ligand>
</feature>
<feature type="binding site" evidence="1">
    <location>
        <position position="84"/>
    </location>
    <ligand>
        <name>S-adenosyl-L-methionine</name>
        <dbReference type="ChEBI" id="CHEBI:59789"/>
    </ligand>
</feature>
<feature type="binding site" evidence="1">
    <location>
        <position position="101"/>
    </location>
    <ligand>
        <name>S-adenosyl-L-methionine</name>
        <dbReference type="ChEBI" id="CHEBI:59789"/>
    </ligand>
</feature>